<keyword id="KW-0456">Lyase</keyword>
<protein>
    <recommendedName>
        <fullName evidence="1">Putative pterin-4-alpha-carbinolamine dehydratase</fullName>
        <shortName evidence="1">PHS</shortName>
        <ecNumber evidence="1">4.2.1.96</ecNumber>
    </recommendedName>
    <alternativeName>
        <fullName evidence="1">4-alpha-hydroxy-tetrahydropterin dehydratase</fullName>
    </alternativeName>
    <alternativeName>
        <fullName evidence="1">Pterin carbinolamine dehydratase</fullName>
        <shortName evidence="1">PCD</shortName>
    </alternativeName>
</protein>
<organism>
    <name type="scientific">Brucella ovis (strain ATCC 25840 / 63/290 / NCTC 10512)</name>
    <dbReference type="NCBI Taxonomy" id="444178"/>
    <lineage>
        <taxon>Bacteria</taxon>
        <taxon>Pseudomonadati</taxon>
        <taxon>Pseudomonadota</taxon>
        <taxon>Alphaproteobacteria</taxon>
        <taxon>Hyphomicrobiales</taxon>
        <taxon>Brucellaceae</taxon>
        <taxon>Brucella/Ochrobactrum group</taxon>
        <taxon>Brucella</taxon>
    </lineage>
</organism>
<feature type="chain" id="PRO_1000050409" description="Putative pterin-4-alpha-carbinolamine dehydratase">
    <location>
        <begin position="1"/>
        <end position="97"/>
    </location>
</feature>
<dbReference type="EC" id="4.2.1.96" evidence="1"/>
<dbReference type="EMBL" id="CP000708">
    <property type="protein sequence ID" value="ABQ61538.1"/>
    <property type="molecule type" value="Genomic_DNA"/>
</dbReference>
<dbReference type="RefSeq" id="WP_002965330.1">
    <property type="nucleotide sequence ID" value="NC_009505.1"/>
</dbReference>
<dbReference type="SMR" id="A5VN26"/>
<dbReference type="KEGG" id="bov:BOV_0080"/>
<dbReference type="HOGENOM" id="CLU_081974_3_2_5"/>
<dbReference type="Proteomes" id="UP000006383">
    <property type="component" value="Chromosome I"/>
</dbReference>
<dbReference type="GO" id="GO:0008124">
    <property type="term" value="F:4-alpha-hydroxytetrahydrobiopterin dehydratase activity"/>
    <property type="evidence" value="ECO:0007669"/>
    <property type="project" value="UniProtKB-UniRule"/>
</dbReference>
<dbReference type="GO" id="GO:0006729">
    <property type="term" value="P:tetrahydrobiopterin biosynthetic process"/>
    <property type="evidence" value="ECO:0007669"/>
    <property type="project" value="InterPro"/>
</dbReference>
<dbReference type="CDD" id="cd00914">
    <property type="entry name" value="PCD_DCoH_subfamily_b"/>
    <property type="match status" value="1"/>
</dbReference>
<dbReference type="Gene3D" id="3.30.1360.20">
    <property type="entry name" value="Transcriptional coactivator/pterin dehydratase"/>
    <property type="match status" value="1"/>
</dbReference>
<dbReference type="HAMAP" id="MF_00434">
    <property type="entry name" value="Pterin_4_alpha"/>
    <property type="match status" value="1"/>
</dbReference>
<dbReference type="InterPro" id="IPR036428">
    <property type="entry name" value="PCD_sf"/>
</dbReference>
<dbReference type="InterPro" id="IPR001533">
    <property type="entry name" value="Pterin_deHydtase"/>
</dbReference>
<dbReference type="NCBIfam" id="NF002017">
    <property type="entry name" value="PRK00823.1-2"/>
    <property type="match status" value="1"/>
</dbReference>
<dbReference type="NCBIfam" id="NF002018">
    <property type="entry name" value="PRK00823.1-3"/>
    <property type="match status" value="1"/>
</dbReference>
<dbReference type="PANTHER" id="PTHR12599">
    <property type="entry name" value="PTERIN-4-ALPHA-CARBINOLAMINE DEHYDRATASE"/>
    <property type="match status" value="1"/>
</dbReference>
<dbReference type="PANTHER" id="PTHR12599:SF0">
    <property type="entry name" value="PTERIN-4-ALPHA-CARBINOLAMINE DEHYDRATASE"/>
    <property type="match status" value="1"/>
</dbReference>
<dbReference type="Pfam" id="PF01329">
    <property type="entry name" value="Pterin_4a"/>
    <property type="match status" value="1"/>
</dbReference>
<dbReference type="SUPFAM" id="SSF55248">
    <property type="entry name" value="PCD-like"/>
    <property type="match status" value="1"/>
</dbReference>
<accession>A5VN26</accession>
<name>PHS_BRUO2</name>
<evidence type="ECO:0000255" key="1">
    <source>
        <dbReference type="HAMAP-Rule" id="MF_00434"/>
    </source>
</evidence>
<reference key="1">
    <citation type="journal article" date="2009" name="PLoS ONE">
        <title>Genome degradation in Brucella ovis corresponds with narrowing of its host range and tissue tropism.</title>
        <authorList>
            <person name="Tsolis R.M."/>
            <person name="Seshadri R."/>
            <person name="Santos R.L."/>
            <person name="Sangari F.J."/>
            <person name="Lobo J.M."/>
            <person name="de Jong M.F."/>
            <person name="Ren Q."/>
            <person name="Myers G."/>
            <person name="Brinkac L.M."/>
            <person name="Nelson W.C."/>
            <person name="Deboy R.T."/>
            <person name="Angiuoli S."/>
            <person name="Khouri H."/>
            <person name="Dimitrov G."/>
            <person name="Robinson J.R."/>
            <person name="Mulligan S."/>
            <person name="Walker R.L."/>
            <person name="Elzer P.E."/>
            <person name="Hassan K.A."/>
            <person name="Paulsen I.T."/>
        </authorList>
    </citation>
    <scope>NUCLEOTIDE SEQUENCE [LARGE SCALE GENOMIC DNA]</scope>
    <source>
        <strain>ATCC 25840 / 63/290 / NCTC 10512</strain>
    </source>
</reference>
<gene>
    <name type="ordered locus">BOV_0080</name>
</gene>
<comment type="catalytic activity">
    <reaction evidence="1">
        <text>(4aS,6R)-4a-hydroxy-L-erythro-5,6,7,8-tetrahydrobiopterin = (6R)-L-erythro-6,7-dihydrobiopterin + H2O</text>
        <dbReference type="Rhea" id="RHEA:11920"/>
        <dbReference type="ChEBI" id="CHEBI:15377"/>
        <dbReference type="ChEBI" id="CHEBI:15642"/>
        <dbReference type="ChEBI" id="CHEBI:43120"/>
        <dbReference type="EC" id="4.2.1.96"/>
    </reaction>
</comment>
<comment type="similarity">
    <text evidence="1">Belongs to the pterin-4-alpha-carbinolamine dehydratase family.</text>
</comment>
<proteinExistence type="inferred from homology"/>
<sequence>MARNRLTESEMNEALRALDGWQKVDGREAITRSFKFKDFSTAFGFMAQAALYAEKLDHHPEWFNAYNRVDVTLATHSENGVTELDIKMARKMNAIAG</sequence>